<gene>
    <name type="ordered locus">AF_2337</name>
</gene>
<organism>
    <name type="scientific">Archaeoglobus fulgidus (strain ATCC 49558 / DSM 4304 / JCM 9628 / NBRC 100126 / VC-16)</name>
    <dbReference type="NCBI Taxonomy" id="224325"/>
    <lineage>
        <taxon>Archaea</taxon>
        <taxon>Methanobacteriati</taxon>
        <taxon>Methanobacteriota</taxon>
        <taxon>Archaeoglobi</taxon>
        <taxon>Archaeoglobales</taxon>
        <taxon>Archaeoglobaceae</taxon>
        <taxon>Archaeoglobus</taxon>
    </lineage>
</organism>
<feature type="chain" id="PRO_0000128139" description="Uncharacterized protein AF_2337">
    <location>
        <begin position="1"/>
        <end position="303"/>
    </location>
</feature>
<sequence length="303" mass="36310">MRLKKEDSILKIFIREDFPYFVDKFLNDTLPAAAYYSKDGELCQIHVSKHFFENEEPEYFIPDRLPARKYVFTFGKESTTPKICVDSHKDFNSIMLSGFEFNEMMIIERADGGEIEYYDRYRIREDFLSEWVENGWFTDFGRSIVESVYFKKKLYFYVSSESYDFSSIEEFEEVFSKYLERMDYKVVKSARKGKFSVVDATKNGKKEKFLLVKPDYEDDSDSISKEELESVTKRIRKNLRIIMDYEDDLSEDAMKWAREQGIEVKTIDEFMKEFMLREWEENDRIAAEDPEFWEDVIRDIFGG</sequence>
<reference key="1">
    <citation type="journal article" date="1997" name="Nature">
        <title>The complete genome sequence of the hyperthermophilic, sulphate-reducing archaeon Archaeoglobus fulgidus.</title>
        <authorList>
            <person name="Klenk H.-P."/>
            <person name="Clayton R.A."/>
            <person name="Tomb J.-F."/>
            <person name="White O."/>
            <person name="Nelson K.E."/>
            <person name="Ketchum K.A."/>
            <person name="Dodson R.J."/>
            <person name="Gwinn M.L."/>
            <person name="Hickey E.K."/>
            <person name="Peterson J.D."/>
            <person name="Richardson D.L."/>
            <person name="Kerlavage A.R."/>
            <person name="Graham D.E."/>
            <person name="Kyrpides N.C."/>
            <person name="Fleischmann R.D."/>
            <person name="Quackenbush J."/>
            <person name="Lee N.H."/>
            <person name="Sutton G.G."/>
            <person name="Gill S.R."/>
            <person name="Kirkness E.F."/>
            <person name="Dougherty B.A."/>
            <person name="McKenney K."/>
            <person name="Adams M.D."/>
            <person name="Loftus B.J."/>
            <person name="Peterson S.N."/>
            <person name="Reich C.I."/>
            <person name="McNeil L.K."/>
            <person name="Badger J.H."/>
            <person name="Glodek A."/>
            <person name="Zhou L."/>
            <person name="Overbeek R."/>
            <person name="Gocayne J.D."/>
            <person name="Weidman J.F."/>
            <person name="McDonald L.A."/>
            <person name="Utterback T.R."/>
            <person name="Cotton M.D."/>
            <person name="Spriggs T."/>
            <person name="Artiach P."/>
            <person name="Kaine B.P."/>
            <person name="Sykes S.M."/>
            <person name="Sadow P.W."/>
            <person name="D'Andrea K.P."/>
            <person name="Bowman C."/>
            <person name="Fujii C."/>
            <person name="Garland S.A."/>
            <person name="Mason T.M."/>
            <person name="Olsen G.J."/>
            <person name="Fraser C.M."/>
            <person name="Smith H.O."/>
            <person name="Woese C.R."/>
            <person name="Venter J.C."/>
        </authorList>
    </citation>
    <scope>NUCLEOTIDE SEQUENCE [LARGE SCALE GENOMIC DNA]</scope>
    <source>
        <strain>ATCC 49558 / DSM 4304 / JCM 9628 / NBRC 100126 / VC-16</strain>
    </source>
</reference>
<protein>
    <recommendedName>
        <fullName>Uncharacterized protein AF_2337</fullName>
    </recommendedName>
</protein>
<dbReference type="EMBL" id="AE000782">
    <property type="protein sequence ID" value="AAB88915.1"/>
    <property type="molecule type" value="Genomic_DNA"/>
</dbReference>
<dbReference type="PIR" id="A69542">
    <property type="entry name" value="A69542"/>
</dbReference>
<dbReference type="RefSeq" id="WP_010879826.1">
    <property type="nucleotide sequence ID" value="NC_000917.1"/>
</dbReference>
<dbReference type="PaxDb" id="224325-AF_2337"/>
<dbReference type="EnsemblBacteria" id="AAB88915">
    <property type="protein sequence ID" value="AAB88915"/>
    <property type="gene ID" value="AF_2337"/>
</dbReference>
<dbReference type="GeneID" id="1485570"/>
<dbReference type="KEGG" id="afu:AF_2337"/>
<dbReference type="HOGENOM" id="CLU_917031_0_0_2"/>
<dbReference type="Proteomes" id="UP000002199">
    <property type="component" value="Chromosome"/>
</dbReference>
<accession>O27947</accession>
<keyword id="KW-1185">Reference proteome</keyword>
<proteinExistence type="predicted"/>
<name>Y2337_ARCFU</name>